<evidence type="ECO:0000250" key="1"/>
<evidence type="ECO:0000256" key="2">
    <source>
        <dbReference type="SAM" id="MobiDB-lite"/>
    </source>
</evidence>
<evidence type="ECO:0000269" key="3">
    <source>
    </source>
</evidence>
<evidence type="ECO:0000269" key="4">
    <source>
    </source>
</evidence>
<evidence type="ECO:0000303" key="5">
    <source>
    </source>
</evidence>
<evidence type="ECO:0000303" key="6">
    <source>
    </source>
</evidence>
<evidence type="ECO:0000303" key="7">
    <source>
    </source>
</evidence>
<evidence type="ECO:0000305" key="8"/>
<accession>Q8IUR6</accession>
<accession>B3DFH2</accession>
<accession>B3KW49</accession>
<accession>D3DQM2</accession>
<accession>F5GXN3</accession>
<accession>Q5HYG4</accession>
<accession>Q5HYK0</accession>
<accession>Q86YR3</accession>
<accession>Q8IZG1</accession>
<protein>
    <recommendedName>
        <fullName>CREB3 regulatory factor</fullName>
    </recommendedName>
    <alternativeName>
        <fullName>Luman recruitment factor</fullName>
        <shortName>LRF</shortName>
    </alternativeName>
</protein>
<dbReference type="EMBL" id="AY139008">
    <property type="protein sequence ID" value="AAN28956.1"/>
    <property type="molecule type" value="mRNA"/>
</dbReference>
<dbReference type="EMBL" id="AY174896">
    <property type="protein sequence ID" value="AAO18732.1"/>
    <property type="molecule type" value="mRNA"/>
</dbReference>
<dbReference type="EMBL" id="AY635785">
    <property type="protein sequence ID" value="AAV34175.1"/>
    <property type="molecule type" value="mRNA"/>
</dbReference>
<dbReference type="EMBL" id="AK124117">
    <property type="protein sequence ID" value="BAG54011.1"/>
    <property type="molecule type" value="mRNA"/>
</dbReference>
<dbReference type="EMBL" id="AC008378">
    <property type="status" value="NOT_ANNOTATED_CDS"/>
    <property type="molecule type" value="Genomic_DNA"/>
</dbReference>
<dbReference type="EMBL" id="CH471062">
    <property type="protein sequence ID" value="EAW61414.1"/>
    <property type="molecule type" value="Genomic_DNA"/>
</dbReference>
<dbReference type="EMBL" id="CH471062">
    <property type="protein sequence ID" value="EAW61415.1"/>
    <property type="molecule type" value="Genomic_DNA"/>
</dbReference>
<dbReference type="EMBL" id="BC041709">
    <property type="protein sequence ID" value="AAH41709.1"/>
    <property type="molecule type" value="mRNA"/>
</dbReference>
<dbReference type="EMBL" id="BX647768">
    <property type="protein sequence ID" value="CAI46039.1"/>
    <property type="molecule type" value="mRNA"/>
</dbReference>
<dbReference type="EMBL" id="BX647573">
    <property type="protein sequence ID" value="CAI46104.1"/>
    <property type="molecule type" value="mRNA"/>
</dbReference>
<dbReference type="CCDS" id="CCDS34293.1">
    <molecule id="Q8IUR6-1"/>
</dbReference>
<dbReference type="CCDS" id="CCDS54948.1">
    <molecule id="Q8IUR6-2"/>
</dbReference>
<dbReference type="RefSeq" id="NP_001161865.1">
    <molecule id="Q8IUR6-2"/>
    <property type="nucleotide sequence ID" value="NM_001168393.2"/>
</dbReference>
<dbReference type="RefSeq" id="NP_001161866.1">
    <molecule id="Q8IUR6-2"/>
    <property type="nucleotide sequence ID" value="NM_001168394.2"/>
</dbReference>
<dbReference type="RefSeq" id="NP_705835.2">
    <molecule id="Q8IUR6-1"/>
    <property type="nucleotide sequence ID" value="NM_153607.3"/>
</dbReference>
<dbReference type="RefSeq" id="XP_006714885.1">
    <molecule id="Q8IUR6-1"/>
    <property type="nucleotide sequence ID" value="XM_006714822.5"/>
</dbReference>
<dbReference type="RefSeq" id="XP_047272757.1">
    <molecule id="Q8IUR6-1"/>
    <property type="nucleotide sequence ID" value="XM_047416801.1"/>
</dbReference>
<dbReference type="RefSeq" id="XP_047272758.1">
    <molecule id="Q8IUR6-1"/>
    <property type="nucleotide sequence ID" value="XM_047416802.1"/>
</dbReference>
<dbReference type="RefSeq" id="XP_054207739.1">
    <molecule id="Q8IUR6-1"/>
    <property type="nucleotide sequence ID" value="XM_054351764.1"/>
</dbReference>
<dbReference type="RefSeq" id="XP_054207740.1">
    <molecule id="Q8IUR6-1"/>
    <property type="nucleotide sequence ID" value="XM_054351765.1"/>
</dbReference>
<dbReference type="RefSeq" id="XP_054207741.1">
    <molecule id="Q8IUR6-1"/>
    <property type="nucleotide sequence ID" value="XM_054351766.1"/>
</dbReference>
<dbReference type="SMR" id="Q8IUR6"/>
<dbReference type="BioGRID" id="127485">
    <property type="interactions" value="11"/>
</dbReference>
<dbReference type="FunCoup" id="Q8IUR6">
    <property type="interactions" value="3284"/>
</dbReference>
<dbReference type="IntAct" id="Q8IUR6">
    <property type="interactions" value="8"/>
</dbReference>
<dbReference type="STRING" id="9606.ENSP00000296953"/>
<dbReference type="ChEMBL" id="CHEMBL5291607"/>
<dbReference type="GlyCosmos" id="Q8IUR6">
    <property type="glycosylation" value="2 sites, 1 glycan"/>
</dbReference>
<dbReference type="GlyGen" id="Q8IUR6">
    <property type="glycosylation" value="2 sites, 1 O-linked glycan (2 sites)"/>
</dbReference>
<dbReference type="iPTMnet" id="Q8IUR6"/>
<dbReference type="PhosphoSitePlus" id="Q8IUR6"/>
<dbReference type="BioMuta" id="CREBRF"/>
<dbReference type="DMDM" id="158563850"/>
<dbReference type="jPOST" id="Q8IUR6"/>
<dbReference type="MassIVE" id="Q8IUR6"/>
<dbReference type="PaxDb" id="9606-ENSP00000296953"/>
<dbReference type="PeptideAtlas" id="Q8IUR6"/>
<dbReference type="ProteomicsDB" id="70604">
    <molecule id="Q8IUR6-1"/>
</dbReference>
<dbReference type="ProteomicsDB" id="70605">
    <molecule id="Q8IUR6-2"/>
</dbReference>
<dbReference type="ProteomicsDB" id="70606">
    <molecule id="Q8IUR6-3"/>
</dbReference>
<dbReference type="Antibodypedia" id="28933">
    <property type="antibodies" value="30 antibodies from 13 providers"/>
</dbReference>
<dbReference type="DNASU" id="153222"/>
<dbReference type="Ensembl" id="ENST00000296953.6">
    <molecule id="Q8IUR6-1"/>
    <property type="protein sequence ID" value="ENSP00000296953.2"/>
    <property type="gene ID" value="ENSG00000164463.12"/>
</dbReference>
<dbReference type="Ensembl" id="ENST00000520420.5">
    <molecule id="Q8IUR6-2"/>
    <property type="protein sequence ID" value="ENSP00000428290.1"/>
    <property type="gene ID" value="ENSG00000164463.12"/>
</dbReference>
<dbReference type="Ensembl" id="ENST00000522692.5">
    <molecule id="Q8IUR6-2"/>
    <property type="protein sequence ID" value="ENSP00000431107.1"/>
    <property type="gene ID" value="ENSG00000164463.12"/>
</dbReference>
<dbReference type="GeneID" id="153222"/>
<dbReference type="KEGG" id="hsa:153222"/>
<dbReference type="MANE-Select" id="ENST00000296953.6">
    <property type="protein sequence ID" value="ENSP00000296953.2"/>
    <property type="RefSeq nucleotide sequence ID" value="NM_153607.3"/>
    <property type="RefSeq protein sequence ID" value="NP_705835.2"/>
</dbReference>
<dbReference type="UCSC" id="uc003mcf.3">
    <molecule id="Q8IUR6-1"/>
    <property type="organism name" value="human"/>
</dbReference>
<dbReference type="AGR" id="HGNC:24050"/>
<dbReference type="CTD" id="153222"/>
<dbReference type="DisGeNET" id="153222"/>
<dbReference type="GeneCards" id="CREBRF"/>
<dbReference type="HGNC" id="HGNC:24050">
    <property type="gene designation" value="CREBRF"/>
</dbReference>
<dbReference type="HPA" id="ENSG00000164463">
    <property type="expression patterns" value="Tissue enhanced (bone)"/>
</dbReference>
<dbReference type="neXtProt" id="NX_Q8IUR6"/>
<dbReference type="OpenTargets" id="ENSG00000164463"/>
<dbReference type="PharmGKB" id="PA162380187"/>
<dbReference type="VEuPathDB" id="HostDB:ENSG00000164463"/>
<dbReference type="eggNOG" id="ENOG502QTAK">
    <property type="taxonomic scope" value="Eukaryota"/>
</dbReference>
<dbReference type="GeneTree" id="ENSGT00390000007125"/>
<dbReference type="HOGENOM" id="CLU_791197_0_0_1"/>
<dbReference type="InParanoid" id="Q8IUR6"/>
<dbReference type="OMA" id="MYQKNGP"/>
<dbReference type="OrthoDB" id="8931646at2759"/>
<dbReference type="PAN-GO" id="Q8IUR6">
    <property type="GO annotations" value="4 GO annotations based on evolutionary models"/>
</dbReference>
<dbReference type="PhylomeDB" id="Q8IUR6"/>
<dbReference type="TreeFam" id="TF330810"/>
<dbReference type="PathwayCommons" id="Q8IUR6"/>
<dbReference type="Reactome" id="R-HSA-8874211">
    <property type="pathway name" value="CREB3 factors activate genes"/>
</dbReference>
<dbReference type="SignaLink" id="Q8IUR6"/>
<dbReference type="SIGNOR" id="Q8IUR6"/>
<dbReference type="BioGRID-ORCS" id="153222">
    <property type="hits" value="10 hits in 1152 CRISPR screens"/>
</dbReference>
<dbReference type="ChiTaRS" id="CREBRF">
    <property type="organism name" value="human"/>
</dbReference>
<dbReference type="GenomeRNAi" id="153222"/>
<dbReference type="Pharos" id="Q8IUR6">
    <property type="development level" value="Tbio"/>
</dbReference>
<dbReference type="PRO" id="PR:Q8IUR6"/>
<dbReference type="Proteomes" id="UP000005640">
    <property type="component" value="Chromosome 5"/>
</dbReference>
<dbReference type="RNAct" id="Q8IUR6">
    <property type="molecule type" value="protein"/>
</dbReference>
<dbReference type="Bgee" id="ENSG00000164463">
    <property type="expression patterns" value="Expressed in calcaneal tendon and 192 other cell types or tissues"/>
</dbReference>
<dbReference type="ExpressionAtlas" id="Q8IUR6">
    <property type="expression patterns" value="baseline and differential"/>
</dbReference>
<dbReference type="GO" id="GO:0005737">
    <property type="term" value="C:cytoplasm"/>
    <property type="evidence" value="ECO:0000314"/>
    <property type="project" value="UniProtKB"/>
</dbReference>
<dbReference type="GO" id="GO:0016604">
    <property type="term" value="C:nuclear body"/>
    <property type="evidence" value="ECO:0000314"/>
    <property type="project" value="UniProtKB"/>
</dbReference>
<dbReference type="GO" id="GO:0005654">
    <property type="term" value="C:nucleoplasm"/>
    <property type="evidence" value="ECO:0000314"/>
    <property type="project" value="HPA"/>
</dbReference>
<dbReference type="GO" id="GO:0005634">
    <property type="term" value="C:nucleus"/>
    <property type="evidence" value="ECO:0000318"/>
    <property type="project" value="GO_Central"/>
</dbReference>
<dbReference type="GO" id="GO:0001228">
    <property type="term" value="F:DNA-binding transcription activator activity, RNA polymerase II-specific"/>
    <property type="evidence" value="ECO:0000314"/>
    <property type="project" value="NTNU_SB"/>
</dbReference>
<dbReference type="GO" id="GO:0000981">
    <property type="term" value="F:DNA-binding transcription factor activity, RNA polymerase II-specific"/>
    <property type="evidence" value="ECO:0000318"/>
    <property type="project" value="GO_Central"/>
</dbReference>
<dbReference type="GO" id="GO:0000977">
    <property type="term" value="F:RNA polymerase II transcription regulatory region sequence-specific DNA binding"/>
    <property type="evidence" value="ECO:0000314"/>
    <property type="project" value="NTNU_SB"/>
</dbReference>
<dbReference type="GO" id="GO:0042711">
    <property type="term" value="P:maternal behavior"/>
    <property type="evidence" value="ECO:0007669"/>
    <property type="project" value="Ensembl"/>
</dbReference>
<dbReference type="GO" id="GO:1900102">
    <property type="term" value="P:negative regulation of endoplasmic reticulum unfolded protein response"/>
    <property type="evidence" value="ECO:0000314"/>
    <property type="project" value="UniProtKB"/>
</dbReference>
<dbReference type="GO" id="GO:2000323">
    <property type="term" value="P:negative regulation of nuclear receptor-mediated glucocorticoid signaling pathway"/>
    <property type="evidence" value="ECO:0007669"/>
    <property type="project" value="Ensembl"/>
</dbReference>
<dbReference type="GO" id="GO:0000122">
    <property type="term" value="P:negative regulation of transcription by RNA polymerase II"/>
    <property type="evidence" value="ECO:0000314"/>
    <property type="project" value="UniProtKB"/>
</dbReference>
<dbReference type="GO" id="GO:1902213">
    <property type="term" value="P:positive regulation of prolactin signaling pathway"/>
    <property type="evidence" value="ECO:0007669"/>
    <property type="project" value="Ensembl"/>
</dbReference>
<dbReference type="GO" id="GO:0045732">
    <property type="term" value="P:positive regulation of protein catabolic process"/>
    <property type="evidence" value="ECO:0000314"/>
    <property type="project" value="UniProtKB"/>
</dbReference>
<dbReference type="GO" id="GO:0045944">
    <property type="term" value="P:positive regulation of transcription by RNA polymerase II"/>
    <property type="evidence" value="ECO:0000314"/>
    <property type="project" value="NTNU_SB"/>
</dbReference>
<dbReference type="GO" id="GO:0006357">
    <property type="term" value="P:regulation of transcription by RNA polymerase II"/>
    <property type="evidence" value="ECO:0000318"/>
    <property type="project" value="GO_Central"/>
</dbReference>
<dbReference type="GO" id="GO:0034976">
    <property type="term" value="P:response to endoplasmic reticulum stress"/>
    <property type="evidence" value="ECO:0000314"/>
    <property type="project" value="UniProtKB"/>
</dbReference>
<dbReference type="GO" id="GO:0006986">
    <property type="term" value="P:response to unfolded protein"/>
    <property type="evidence" value="ECO:0007669"/>
    <property type="project" value="UniProtKB-KW"/>
</dbReference>
<dbReference type="CDD" id="cd14809">
    <property type="entry name" value="bZIP_AUREO-like"/>
    <property type="match status" value="1"/>
</dbReference>
<dbReference type="InterPro" id="IPR004827">
    <property type="entry name" value="bZIP"/>
</dbReference>
<dbReference type="InterPro" id="IPR046347">
    <property type="entry name" value="bZIP_sf"/>
</dbReference>
<dbReference type="InterPro" id="IPR039165">
    <property type="entry name" value="CREBRF"/>
</dbReference>
<dbReference type="PANTHER" id="PTHR21552">
    <property type="entry name" value="ADULT RETINA PROTEIN"/>
    <property type="match status" value="1"/>
</dbReference>
<dbReference type="PANTHER" id="PTHR21552:SF2">
    <property type="entry name" value="CREB3 REGULATORY FACTOR"/>
    <property type="match status" value="1"/>
</dbReference>
<dbReference type="SUPFAM" id="SSF57959">
    <property type="entry name" value="Leucine zipper domain"/>
    <property type="match status" value="1"/>
</dbReference>
<dbReference type="PROSITE" id="PS00036">
    <property type="entry name" value="BZIP_BASIC"/>
    <property type="match status" value="1"/>
</dbReference>
<proteinExistence type="evidence at protein level"/>
<keyword id="KW-0025">Alternative splicing</keyword>
<keyword id="KW-0539">Nucleus</keyword>
<keyword id="KW-1267">Proteomics identification</keyword>
<keyword id="KW-1185">Reference proteome</keyword>
<keyword id="KW-0678">Repressor</keyword>
<keyword id="KW-0346">Stress response</keyword>
<keyword id="KW-0804">Transcription</keyword>
<keyword id="KW-0805">Transcription regulation</keyword>
<keyword id="KW-0813">Transport</keyword>
<keyword id="KW-0834">Unfolded protein response</keyword>
<sequence>MPQPSVSGMDPPFGDAFRSHTFSEQTLMSTDLLANSSDPDFMYELDREMNYQQNPRDNFLSLEDCKDIENLESFTDVLDNEGALTSNWEQWDTYCEDLTKYTKLTSCDIWGTKEVDYLGLDDFSSPYQDEEVISKTPTLAQLNSEDSQSVSDSLYYPDSLFSVKQNPLPSSFPGKKITSRAAAPVCSSKTLQAEVPLSDCVQKASKPTSSTQIMVKTNMYHNEKVNFHVECKDYVKKAKVKINPVQQSRPLLSQIHTDAAKENTCYCGAVAKRQEKKGMEPLQGHATPALPFKETQELLLSPLPQEGPGSLAAGESSSLSASTSVSDSSQKKEEHNYSLFVSDNLGEQPTKCSPEEDEEDEEDVDDEDHDEGFGSEHELSENEEEEEEEEDYEDDKDDDISDTFSEPGYENDSVEDLKEVTSISSRKRGKRRYFWEYSEQLTPSQQERMLRPSEWNRDTLPSNMYQKNGLHHGKYAVKKSRRTDVEDLTPNPKKLLQIGNELRKLNKVISDLTPVSELPLTARPRSRKEKNKLASRACRLKKKAQYEANKVKLWGLNTEYDNLLFVINSIKQEIVNRVQNPRDERGPNMGQKLEILIKDTLGLPVAGQTSEFVNQVLEKTAEGNPTGGLVGLRIPTSKV</sequence>
<reference key="1">
    <citation type="journal article" date="2008" name="Mol. Cell. Biol.">
        <title>A novel protein, Luman/CREB3 recruitment factor, inhibits Luman activation of the unfolded protein response.</title>
        <authorList>
            <person name="Audas T.E."/>
            <person name="Li Y."/>
            <person name="Liang G."/>
            <person name="Lu R."/>
        </authorList>
    </citation>
    <scope>NUCLEOTIDE SEQUENCE [MRNA] (ISOFORMS 1 AND 2)</scope>
    <scope>FUNCTION</scope>
    <scope>INTERACTION WITH CREB3</scope>
    <scope>SUBCELLULAR LOCATION</scope>
    <scope>INDUCTION</scope>
    <source>
        <tissue>Cervix carcinoma</tissue>
        <tissue>Retina</tissue>
    </source>
</reference>
<reference key="2">
    <citation type="journal article" date="2004" name="Nat. Genet.">
        <title>Complete sequencing and characterization of 21,243 full-length human cDNAs.</title>
        <authorList>
            <person name="Ota T."/>
            <person name="Suzuki Y."/>
            <person name="Nishikawa T."/>
            <person name="Otsuki T."/>
            <person name="Sugiyama T."/>
            <person name="Irie R."/>
            <person name="Wakamatsu A."/>
            <person name="Hayashi K."/>
            <person name="Sato H."/>
            <person name="Nagai K."/>
            <person name="Kimura K."/>
            <person name="Makita H."/>
            <person name="Sekine M."/>
            <person name="Obayashi M."/>
            <person name="Nishi T."/>
            <person name="Shibahara T."/>
            <person name="Tanaka T."/>
            <person name="Ishii S."/>
            <person name="Yamamoto J."/>
            <person name="Saito K."/>
            <person name="Kawai Y."/>
            <person name="Isono Y."/>
            <person name="Nakamura Y."/>
            <person name="Nagahari K."/>
            <person name="Murakami K."/>
            <person name="Yasuda T."/>
            <person name="Iwayanagi T."/>
            <person name="Wagatsuma M."/>
            <person name="Shiratori A."/>
            <person name="Sudo H."/>
            <person name="Hosoiri T."/>
            <person name="Kaku Y."/>
            <person name="Kodaira H."/>
            <person name="Kondo H."/>
            <person name="Sugawara M."/>
            <person name="Takahashi M."/>
            <person name="Kanda K."/>
            <person name="Yokoi T."/>
            <person name="Furuya T."/>
            <person name="Kikkawa E."/>
            <person name="Omura Y."/>
            <person name="Abe K."/>
            <person name="Kamihara K."/>
            <person name="Katsuta N."/>
            <person name="Sato K."/>
            <person name="Tanikawa M."/>
            <person name="Yamazaki M."/>
            <person name="Ninomiya K."/>
            <person name="Ishibashi T."/>
            <person name="Yamashita H."/>
            <person name="Murakawa K."/>
            <person name="Fujimori K."/>
            <person name="Tanai H."/>
            <person name="Kimata M."/>
            <person name="Watanabe M."/>
            <person name="Hiraoka S."/>
            <person name="Chiba Y."/>
            <person name="Ishida S."/>
            <person name="Ono Y."/>
            <person name="Takiguchi S."/>
            <person name="Watanabe S."/>
            <person name="Yosida M."/>
            <person name="Hotuta T."/>
            <person name="Kusano J."/>
            <person name="Kanehori K."/>
            <person name="Takahashi-Fujii A."/>
            <person name="Hara H."/>
            <person name="Tanase T.-O."/>
            <person name="Nomura Y."/>
            <person name="Togiya S."/>
            <person name="Komai F."/>
            <person name="Hara R."/>
            <person name="Takeuchi K."/>
            <person name="Arita M."/>
            <person name="Imose N."/>
            <person name="Musashino K."/>
            <person name="Yuuki H."/>
            <person name="Oshima A."/>
            <person name="Sasaki N."/>
            <person name="Aotsuka S."/>
            <person name="Yoshikawa Y."/>
            <person name="Matsunawa H."/>
            <person name="Ichihara T."/>
            <person name="Shiohata N."/>
            <person name="Sano S."/>
            <person name="Moriya S."/>
            <person name="Momiyama H."/>
            <person name="Satoh N."/>
            <person name="Takami S."/>
            <person name="Terashima Y."/>
            <person name="Suzuki O."/>
            <person name="Nakagawa S."/>
            <person name="Senoh A."/>
            <person name="Mizoguchi H."/>
            <person name="Goto Y."/>
            <person name="Shimizu F."/>
            <person name="Wakebe H."/>
            <person name="Hishigaki H."/>
            <person name="Watanabe T."/>
            <person name="Sugiyama A."/>
            <person name="Takemoto M."/>
            <person name="Kawakami B."/>
            <person name="Yamazaki M."/>
            <person name="Watanabe K."/>
            <person name="Kumagai A."/>
            <person name="Itakura S."/>
            <person name="Fukuzumi Y."/>
            <person name="Fujimori Y."/>
            <person name="Komiyama M."/>
            <person name="Tashiro H."/>
            <person name="Tanigami A."/>
            <person name="Fujiwara T."/>
            <person name="Ono T."/>
            <person name="Yamada K."/>
            <person name="Fujii Y."/>
            <person name="Ozaki K."/>
            <person name="Hirao M."/>
            <person name="Ohmori Y."/>
            <person name="Kawabata A."/>
            <person name="Hikiji T."/>
            <person name="Kobatake N."/>
            <person name="Inagaki H."/>
            <person name="Ikema Y."/>
            <person name="Okamoto S."/>
            <person name="Okitani R."/>
            <person name="Kawakami T."/>
            <person name="Noguchi S."/>
            <person name="Itoh T."/>
            <person name="Shigeta K."/>
            <person name="Senba T."/>
            <person name="Matsumura K."/>
            <person name="Nakajima Y."/>
            <person name="Mizuno T."/>
            <person name="Morinaga M."/>
            <person name="Sasaki M."/>
            <person name="Togashi T."/>
            <person name="Oyama M."/>
            <person name="Hata H."/>
            <person name="Watanabe M."/>
            <person name="Komatsu T."/>
            <person name="Mizushima-Sugano J."/>
            <person name="Satoh T."/>
            <person name="Shirai Y."/>
            <person name="Takahashi Y."/>
            <person name="Nakagawa K."/>
            <person name="Okumura K."/>
            <person name="Nagase T."/>
            <person name="Nomura N."/>
            <person name="Kikuchi H."/>
            <person name="Masuho Y."/>
            <person name="Yamashita R."/>
            <person name="Nakai K."/>
            <person name="Yada T."/>
            <person name="Nakamura Y."/>
            <person name="Ohara O."/>
            <person name="Isogai T."/>
            <person name="Sugano S."/>
        </authorList>
    </citation>
    <scope>NUCLEOTIDE SEQUENCE [LARGE SCALE MRNA] (ISOFORM 2)</scope>
    <source>
        <tissue>Testis</tissue>
    </source>
</reference>
<reference key="3">
    <citation type="journal article" date="2004" name="Nature">
        <title>The DNA sequence and comparative analysis of human chromosome 5.</title>
        <authorList>
            <person name="Schmutz J."/>
            <person name="Martin J."/>
            <person name="Terry A."/>
            <person name="Couronne O."/>
            <person name="Grimwood J."/>
            <person name="Lowry S."/>
            <person name="Gordon L.A."/>
            <person name="Scott D."/>
            <person name="Xie G."/>
            <person name="Huang W."/>
            <person name="Hellsten U."/>
            <person name="Tran-Gyamfi M."/>
            <person name="She X."/>
            <person name="Prabhakar S."/>
            <person name="Aerts A."/>
            <person name="Altherr M."/>
            <person name="Bajorek E."/>
            <person name="Black S."/>
            <person name="Branscomb E."/>
            <person name="Caoile C."/>
            <person name="Challacombe J.F."/>
            <person name="Chan Y.M."/>
            <person name="Denys M."/>
            <person name="Detter J.C."/>
            <person name="Escobar J."/>
            <person name="Flowers D."/>
            <person name="Fotopulos D."/>
            <person name="Glavina T."/>
            <person name="Gomez M."/>
            <person name="Gonzales E."/>
            <person name="Goodstein D."/>
            <person name="Grigoriev I."/>
            <person name="Groza M."/>
            <person name="Hammon N."/>
            <person name="Hawkins T."/>
            <person name="Haydu L."/>
            <person name="Israni S."/>
            <person name="Jett J."/>
            <person name="Kadner K."/>
            <person name="Kimball H."/>
            <person name="Kobayashi A."/>
            <person name="Lopez F."/>
            <person name="Lou Y."/>
            <person name="Martinez D."/>
            <person name="Medina C."/>
            <person name="Morgan J."/>
            <person name="Nandkeshwar R."/>
            <person name="Noonan J.P."/>
            <person name="Pitluck S."/>
            <person name="Pollard M."/>
            <person name="Predki P."/>
            <person name="Priest J."/>
            <person name="Ramirez L."/>
            <person name="Retterer J."/>
            <person name="Rodriguez A."/>
            <person name="Rogers S."/>
            <person name="Salamov A."/>
            <person name="Salazar A."/>
            <person name="Thayer N."/>
            <person name="Tice H."/>
            <person name="Tsai M."/>
            <person name="Ustaszewska A."/>
            <person name="Vo N."/>
            <person name="Wheeler J."/>
            <person name="Wu K."/>
            <person name="Yang J."/>
            <person name="Dickson M."/>
            <person name="Cheng J.-F."/>
            <person name="Eichler E.E."/>
            <person name="Olsen A."/>
            <person name="Pennacchio L.A."/>
            <person name="Rokhsar D.S."/>
            <person name="Richardson P."/>
            <person name="Lucas S.M."/>
            <person name="Myers R.M."/>
            <person name="Rubin E.M."/>
        </authorList>
    </citation>
    <scope>NUCLEOTIDE SEQUENCE [LARGE SCALE GENOMIC DNA]</scope>
</reference>
<reference key="4">
    <citation type="submission" date="2005-09" db="EMBL/GenBank/DDBJ databases">
        <authorList>
            <person name="Mural R.J."/>
            <person name="Istrail S."/>
            <person name="Sutton G.G."/>
            <person name="Florea L."/>
            <person name="Halpern A.L."/>
            <person name="Mobarry C.M."/>
            <person name="Lippert R."/>
            <person name="Walenz B."/>
            <person name="Shatkay H."/>
            <person name="Dew I."/>
            <person name="Miller J.R."/>
            <person name="Flanigan M.J."/>
            <person name="Edwards N.J."/>
            <person name="Bolanos R."/>
            <person name="Fasulo D."/>
            <person name="Halldorsson B.V."/>
            <person name="Hannenhalli S."/>
            <person name="Turner R."/>
            <person name="Yooseph S."/>
            <person name="Lu F."/>
            <person name="Nusskern D.R."/>
            <person name="Shue B.C."/>
            <person name="Zheng X.H."/>
            <person name="Zhong F."/>
            <person name="Delcher A.L."/>
            <person name="Huson D.H."/>
            <person name="Kravitz S.A."/>
            <person name="Mouchard L."/>
            <person name="Reinert K."/>
            <person name="Remington K.A."/>
            <person name="Clark A.G."/>
            <person name="Waterman M.S."/>
            <person name="Eichler E.E."/>
            <person name="Adams M.D."/>
            <person name="Hunkapiller M.W."/>
            <person name="Myers E.W."/>
            <person name="Venter J.C."/>
        </authorList>
    </citation>
    <scope>NUCLEOTIDE SEQUENCE [LARGE SCALE GENOMIC DNA]</scope>
</reference>
<reference key="5">
    <citation type="journal article" date="2004" name="Genome Res.">
        <title>The status, quality, and expansion of the NIH full-length cDNA project: the Mammalian Gene Collection (MGC).</title>
        <authorList>
            <consortium name="The MGC Project Team"/>
        </authorList>
    </citation>
    <scope>NUCLEOTIDE SEQUENCE [LARGE SCALE MRNA] (ISOFORM 1)</scope>
    <scope>VARIANT ALA-483</scope>
    <source>
        <tissue>Lung</tissue>
    </source>
</reference>
<reference key="6">
    <citation type="journal article" date="2007" name="BMC Genomics">
        <title>The full-ORF clone resource of the German cDNA consortium.</title>
        <authorList>
            <person name="Bechtel S."/>
            <person name="Rosenfelder H."/>
            <person name="Duda A."/>
            <person name="Schmidt C.P."/>
            <person name="Ernst U."/>
            <person name="Wellenreuther R."/>
            <person name="Mehrle A."/>
            <person name="Schuster C."/>
            <person name="Bahr A."/>
            <person name="Bloecker H."/>
            <person name="Heubner D."/>
            <person name="Hoerlein A."/>
            <person name="Michel G."/>
            <person name="Wedler H."/>
            <person name="Koehrer K."/>
            <person name="Ottenwaelder B."/>
            <person name="Poustka A."/>
            <person name="Wiemann S."/>
            <person name="Schupp I."/>
        </authorList>
    </citation>
    <scope>NUCLEOTIDE SEQUENCE [LARGE SCALE MRNA] OF 1-602 (ISOFORM 3)</scope>
    <source>
        <tissue>Adipose tissue</tissue>
        <tissue>Endometrium</tissue>
    </source>
</reference>
<gene>
    <name type="primary">CREBRF</name>
    <name type="synonym">C5orf41</name>
</gene>
<organism>
    <name type="scientific">Homo sapiens</name>
    <name type="common">Human</name>
    <dbReference type="NCBI Taxonomy" id="9606"/>
    <lineage>
        <taxon>Eukaryota</taxon>
        <taxon>Metazoa</taxon>
        <taxon>Chordata</taxon>
        <taxon>Craniata</taxon>
        <taxon>Vertebrata</taxon>
        <taxon>Euteleostomi</taxon>
        <taxon>Mammalia</taxon>
        <taxon>Eutheria</taxon>
        <taxon>Euarchontoglires</taxon>
        <taxon>Primates</taxon>
        <taxon>Haplorrhini</taxon>
        <taxon>Catarrhini</taxon>
        <taxon>Hominidae</taxon>
        <taxon>Homo</taxon>
    </lineage>
</organism>
<comment type="function">
    <text evidence="4">Acts as a negative regulator of the endoplasmic reticulum stress response or unfolded protein response (UPR). Represses the transcriptional activity of CREB3 during the UPR. Recruits CREB3 into nuclear foci.</text>
</comment>
<comment type="subunit">
    <text evidence="4">Interacts (via leucine-zipper domain) with CREB3 (via leucine-zipper domain); the interaction promotes CREB3 degradation.</text>
</comment>
<comment type="interaction">
    <interactant intactId="EBI-1042699">
        <id>Q8IUR6</id>
    </interactant>
    <interactant intactId="EBI-625022">
        <id>O43889-2</id>
        <label>CREB3</label>
    </interactant>
    <organismsDiffer>false</organismsDiffer>
    <experiments>4</experiments>
</comment>
<comment type="interaction">
    <interactant intactId="EBI-1042699">
        <id>Q8IUR6</id>
    </interactant>
    <interactant intactId="EBI-2872455">
        <id>O60519</id>
        <label>CREBL2</label>
    </interactant>
    <organismsDiffer>false</organismsDiffer>
    <experiments>5</experiments>
</comment>
<comment type="interaction">
    <interactant intactId="EBI-1042699">
        <id>Q8IUR6</id>
    </interactant>
    <interactant intactId="EBI-11991632">
        <id>Q14451-3</id>
        <label>GRB7</label>
    </interactant>
    <organismsDiffer>false</organismsDiffer>
    <experiments>3</experiments>
</comment>
<comment type="interaction">
    <interactant intactId="EBI-1042699">
        <id>Q8IUR6</id>
    </interactant>
    <interactant intactId="EBI-10172526">
        <id>Q9UJV3-2</id>
        <label>MID2</label>
    </interactant>
    <organismsDiffer>false</organismsDiffer>
    <experiments>3</experiments>
</comment>
<comment type="interaction">
    <interactant intactId="EBI-1042699">
        <id>Q8IUR6</id>
    </interactant>
    <interactant intactId="EBI-747693">
        <id>P41227</id>
        <label>NAA10</label>
    </interactant>
    <organismsDiffer>false</organismsDiffer>
    <experiments>3</experiments>
</comment>
<comment type="interaction">
    <interactant intactId="EBI-1042699">
        <id>Q8IUR6</id>
    </interactant>
    <interactant intactId="EBI-2585120">
        <id>Q9BSU3</id>
        <label>NAA11</label>
    </interactant>
    <organismsDiffer>false</organismsDiffer>
    <experiments>3</experiments>
</comment>
<comment type="subcellular location">
    <subcellularLocation>
        <location evidence="4">Nucleus</location>
    </subcellularLocation>
    <text>Colocalizes with CREB3 in nuclear foci.</text>
</comment>
<comment type="alternative products">
    <event type="alternative splicing"/>
    <isoform>
        <id>Q8IUR6-1</id>
        <name>1</name>
        <sequence type="displayed"/>
    </isoform>
    <isoform>
        <id>Q8IUR6-2</id>
        <name>2</name>
        <sequence type="described" ref="VSP_027601 VSP_027602"/>
    </isoform>
    <isoform>
        <id>Q8IUR6-3</id>
        <name>3</name>
        <sequence type="described" ref="VSP_027603"/>
    </isoform>
</comment>
<comment type="induction">
    <text evidence="4">Up-regulated by endoplasmic reticulum stress.</text>
</comment>
<comment type="PTM">
    <text>Probably degraded by the proteasome.</text>
</comment>
<comment type="similarity">
    <text evidence="8">Belongs to the bZIP family. CREBRF subfamily.</text>
</comment>
<comment type="sequence caution" evidence="8">
    <conflict type="erroneous gene model prediction">
        <sequence resource="EMBL" id="AC008378"/>
    </conflict>
</comment>
<feature type="chain" id="PRO_0000299306" description="CREB3 regulatory factor">
    <location>
        <begin position="1"/>
        <end position="639"/>
    </location>
</feature>
<feature type="domain" description="bZIP">
    <location>
        <begin position="521"/>
        <end position="584"/>
    </location>
</feature>
<feature type="region of interest" description="Disordered" evidence="2">
    <location>
        <begin position="302"/>
        <end position="422"/>
    </location>
</feature>
<feature type="region of interest" description="Basic motif" evidence="1">
    <location>
        <begin position="523"/>
        <end position="532"/>
    </location>
</feature>
<feature type="region of interest" description="Leucine-zipper" evidence="1">
    <location>
        <begin position="533"/>
        <end position="540"/>
    </location>
</feature>
<feature type="compositionally biased region" description="Low complexity" evidence="2">
    <location>
        <begin position="310"/>
        <end position="328"/>
    </location>
</feature>
<feature type="compositionally biased region" description="Polar residues" evidence="2">
    <location>
        <begin position="339"/>
        <end position="351"/>
    </location>
</feature>
<feature type="compositionally biased region" description="Acidic residues" evidence="2">
    <location>
        <begin position="355"/>
        <end position="370"/>
    </location>
</feature>
<feature type="compositionally biased region" description="Basic and acidic residues" evidence="2">
    <location>
        <begin position="371"/>
        <end position="380"/>
    </location>
</feature>
<feature type="compositionally biased region" description="Acidic residues" evidence="2">
    <location>
        <begin position="381"/>
        <end position="401"/>
    </location>
</feature>
<feature type="splice variant" id="VSP_027601" description="In isoform 2." evidence="5 7">
    <original>YENDSVEDL</original>
    <variation>IIMLASLPD</variation>
    <location>
        <begin position="409"/>
        <end position="417"/>
    </location>
</feature>
<feature type="splice variant" id="VSP_027602" description="In isoform 2." evidence="5 7">
    <location>
        <begin position="418"/>
        <end position="639"/>
    </location>
</feature>
<feature type="splice variant" id="VSP_027603" description="In isoform 3." evidence="6">
    <original>H</original>
    <variation>HGK</variation>
    <location>
        <position position="472"/>
    </location>
</feature>
<feature type="sequence variant" id="VAR_034795" description="In dbSNP:rs17854147." evidence="3">
    <original>T</original>
    <variation>A</variation>
    <location>
        <position position="483"/>
    </location>
</feature>
<feature type="sequence conflict" description="In Ref. 6; CAI46104." evidence="8" ref="6">
    <original>K</original>
    <variation>R</variation>
    <location>
        <position position="232"/>
    </location>
</feature>
<feature type="sequence conflict" description="In Ref. 1; AAN28956." evidence="8" ref="1">
    <original>D</original>
    <variation>G</variation>
    <location>
        <position position="561"/>
    </location>
</feature>
<feature type="sequence conflict" description="In Ref. 6; CAI46104." evidence="8" ref="6">
    <original>N</original>
    <variation>D</variation>
    <location>
        <position position="588"/>
    </location>
</feature>
<name>CRERF_HUMAN</name>